<gene>
    <name evidence="1" type="primary">rpmG2</name>
    <name type="ordered locus">Mjls_5115</name>
</gene>
<dbReference type="EMBL" id="CP000580">
    <property type="protein sequence ID" value="ABO00880.1"/>
    <property type="molecule type" value="Genomic_DNA"/>
</dbReference>
<dbReference type="SMR" id="A3Q6V2"/>
<dbReference type="KEGG" id="mjl:Mjls_5115"/>
<dbReference type="HOGENOM" id="CLU_190949_1_1_11"/>
<dbReference type="BioCyc" id="MSP164757:G1G8C-5165-MONOMER"/>
<dbReference type="GO" id="GO:0022625">
    <property type="term" value="C:cytosolic large ribosomal subunit"/>
    <property type="evidence" value="ECO:0007669"/>
    <property type="project" value="TreeGrafter"/>
</dbReference>
<dbReference type="GO" id="GO:0003735">
    <property type="term" value="F:structural constituent of ribosome"/>
    <property type="evidence" value="ECO:0007669"/>
    <property type="project" value="InterPro"/>
</dbReference>
<dbReference type="GO" id="GO:0006412">
    <property type="term" value="P:translation"/>
    <property type="evidence" value="ECO:0007669"/>
    <property type="project" value="UniProtKB-UniRule"/>
</dbReference>
<dbReference type="FunFam" id="2.20.28.120:FF:000002">
    <property type="entry name" value="50S ribosomal protein L33"/>
    <property type="match status" value="1"/>
</dbReference>
<dbReference type="Gene3D" id="2.20.28.120">
    <property type="entry name" value="Ribosomal protein L33"/>
    <property type="match status" value="1"/>
</dbReference>
<dbReference type="HAMAP" id="MF_00294">
    <property type="entry name" value="Ribosomal_bL33"/>
    <property type="match status" value="1"/>
</dbReference>
<dbReference type="InterPro" id="IPR001705">
    <property type="entry name" value="Ribosomal_bL33"/>
</dbReference>
<dbReference type="InterPro" id="IPR038584">
    <property type="entry name" value="Ribosomal_bL33_sf"/>
</dbReference>
<dbReference type="InterPro" id="IPR011332">
    <property type="entry name" value="Ribosomal_zn-bd"/>
</dbReference>
<dbReference type="NCBIfam" id="NF001860">
    <property type="entry name" value="PRK00595.1"/>
    <property type="match status" value="1"/>
</dbReference>
<dbReference type="NCBIfam" id="TIGR01023">
    <property type="entry name" value="rpmG_bact"/>
    <property type="match status" value="1"/>
</dbReference>
<dbReference type="PANTHER" id="PTHR15238">
    <property type="entry name" value="54S RIBOSOMAL PROTEIN L39, MITOCHONDRIAL"/>
    <property type="match status" value="1"/>
</dbReference>
<dbReference type="PANTHER" id="PTHR15238:SF1">
    <property type="entry name" value="LARGE RIBOSOMAL SUBUNIT PROTEIN BL33M"/>
    <property type="match status" value="1"/>
</dbReference>
<dbReference type="Pfam" id="PF00471">
    <property type="entry name" value="Ribosomal_L33"/>
    <property type="match status" value="1"/>
</dbReference>
<dbReference type="SUPFAM" id="SSF57829">
    <property type="entry name" value="Zn-binding ribosomal proteins"/>
    <property type="match status" value="1"/>
</dbReference>
<reference key="1">
    <citation type="submission" date="2007-02" db="EMBL/GenBank/DDBJ databases">
        <title>Complete sequence of Mycobacterium sp. JLS.</title>
        <authorList>
            <consortium name="US DOE Joint Genome Institute"/>
            <person name="Copeland A."/>
            <person name="Lucas S."/>
            <person name="Lapidus A."/>
            <person name="Barry K."/>
            <person name="Detter J.C."/>
            <person name="Glavina del Rio T."/>
            <person name="Hammon N."/>
            <person name="Israni S."/>
            <person name="Dalin E."/>
            <person name="Tice H."/>
            <person name="Pitluck S."/>
            <person name="Chain P."/>
            <person name="Malfatti S."/>
            <person name="Shin M."/>
            <person name="Vergez L."/>
            <person name="Schmutz J."/>
            <person name="Larimer F."/>
            <person name="Land M."/>
            <person name="Hauser L."/>
            <person name="Kyrpides N."/>
            <person name="Mikhailova N."/>
            <person name="Miller C.D."/>
            <person name="Anderson A.J."/>
            <person name="Sims R.C."/>
            <person name="Richardson P."/>
        </authorList>
    </citation>
    <scope>NUCLEOTIDE SEQUENCE [LARGE SCALE GENOMIC DNA]</scope>
    <source>
        <strain>JLS</strain>
    </source>
</reference>
<protein>
    <recommendedName>
        <fullName evidence="1">Large ribosomal subunit protein bL33B</fullName>
    </recommendedName>
    <alternativeName>
        <fullName evidence="1">50S ribosomal protein L33 2</fullName>
    </alternativeName>
</protein>
<organism>
    <name type="scientific">Mycobacterium sp. (strain JLS)</name>
    <dbReference type="NCBI Taxonomy" id="164757"/>
    <lineage>
        <taxon>Bacteria</taxon>
        <taxon>Bacillati</taxon>
        <taxon>Actinomycetota</taxon>
        <taxon>Actinomycetes</taxon>
        <taxon>Mycobacteriales</taxon>
        <taxon>Mycobacteriaceae</taxon>
        <taxon>Mycobacterium</taxon>
    </lineage>
</organism>
<name>RL332_MYCSJ</name>
<comment type="similarity">
    <text evidence="1">Belongs to the bacterial ribosomal protein bL33 family.</text>
</comment>
<accession>A3Q6V2</accession>
<feature type="chain" id="PRO_0000356557" description="Large ribosomal subunit protein bL33B">
    <location>
        <begin position="1"/>
        <end position="54"/>
    </location>
</feature>
<proteinExistence type="inferred from homology"/>
<evidence type="ECO:0000255" key="1">
    <source>
        <dbReference type="HAMAP-Rule" id="MF_00294"/>
    </source>
</evidence>
<keyword id="KW-0687">Ribonucleoprotein</keyword>
<keyword id="KW-0689">Ribosomal protein</keyword>
<sequence>MARNEIRPIVKLRSTAGTGYTYVTRKNRRNDPDRLMLKKYDPVVRRHVDFREER</sequence>